<feature type="chain" id="PRO_1000068852" description="Probable alpha-L-glutamate ligase">
    <location>
        <begin position="1"/>
        <end position="301"/>
    </location>
</feature>
<feature type="domain" description="ATP-grasp" evidence="1">
    <location>
        <begin position="104"/>
        <end position="287"/>
    </location>
</feature>
<feature type="binding site" evidence="1">
    <location>
        <position position="141"/>
    </location>
    <ligand>
        <name>ATP</name>
        <dbReference type="ChEBI" id="CHEBI:30616"/>
    </ligand>
</feature>
<feature type="binding site" evidence="1">
    <location>
        <begin position="178"/>
        <end position="179"/>
    </location>
    <ligand>
        <name>ATP</name>
        <dbReference type="ChEBI" id="CHEBI:30616"/>
    </ligand>
</feature>
<feature type="binding site" evidence="1">
    <location>
        <position position="187"/>
    </location>
    <ligand>
        <name>ATP</name>
        <dbReference type="ChEBI" id="CHEBI:30616"/>
    </ligand>
</feature>
<feature type="binding site" evidence="1">
    <location>
        <begin position="211"/>
        <end position="213"/>
    </location>
    <ligand>
        <name>ATP</name>
        <dbReference type="ChEBI" id="CHEBI:30616"/>
    </ligand>
</feature>
<feature type="binding site" evidence="1">
    <location>
        <position position="248"/>
    </location>
    <ligand>
        <name>Mg(2+)</name>
        <dbReference type="ChEBI" id="CHEBI:18420"/>
        <label>1</label>
    </ligand>
</feature>
<feature type="binding site" evidence="1">
    <location>
        <position position="248"/>
    </location>
    <ligand>
        <name>Mn(2+)</name>
        <dbReference type="ChEBI" id="CHEBI:29035"/>
        <label>1</label>
    </ligand>
</feature>
<feature type="binding site" evidence="1">
    <location>
        <position position="260"/>
    </location>
    <ligand>
        <name>Mg(2+)</name>
        <dbReference type="ChEBI" id="CHEBI:18420"/>
        <label>1</label>
    </ligand>
</feature>
<feature type="binding site" evidence="1">
    <location>
        <position position="260"/>
    </location>
    <ligand>
        <name>Mg(2+)</name>
        <dbReference type="ChEBI" id="CHEBI:18420"/>
        <label>2</label>
    </ligand>
</feature>
<feature type="binding site" evidence="1">
    <location>
        <position position="260"/>
    </location>
    <ligand>
        <name>Mn(2+)</name>
        <dbReference type="ChEBI" id="CHEBI:29035"/>
        <label>1</label>
    </ligand>
</feature>
<feature type="binding site" evidence="1">
    <location>
        <position position="260"/>
    </location>
    <ligand>
        <name>Mn(2+)</name>
        <dbReference type="ChEBI" id="CHEBI:29035"/>
        <label>2</label>
    </ligand>
</feature>
<feature type="binding site" evidence="1">
    <location>
        <position position="262"/>
    </location>
    <ligand>
        <name>Mg(2+)</name>
        <dbReference type="ChEBI" id="CHEBI:18420"/>
        <label>2</label>
    </ligand>
</feature>
<feature type="binding site" evidence="1">
    <location>
        <position position="262"/>
    </location>
    <ligand>
        <name>Mn(2+)</name>
        <dbReference type="ChEBI" id="CHEBI:29035"/>
        <label>2</label>
    </ligand>
</feature>
<name>RIMK_STUS1</name>
<comment type="cofactor">
    <cofactor evidence="1">
        <name>Mg(2+)</name>
        <dbReference type="ChEBI" id="CHEBI:18420"/>
    </cofactor>
    <cofactor evidence="1">
        <name>Mn(2+)</name>
        <dbReference type="ChEBI" id="CHEBI:29035"/>
    </cofactor>
    <text evidence="1">Binds 2 magnesium or manganese ions per subunit.</text>
</comment>
<comment type="similarity">
    <text evidence="1">Belongs to the RimK family.</text>
</comment>
<organism>
    <name type="scientific">Stutzerimonas stutzeri (strain A1501)</name>
    <name type="common">Pseudomonas stutzeri</name>
    <dbReference type="NCBI Taxonomy" id="379731"/>
    <lineage>
        <taxon>Bacteria</taxon>
        <taxon>Pseudomonadati</taxon>
        <taxon>Pseudomonadota</taxon>
        <taxon>Gammaproteobacteria</taxon>
        <taxon>Pseudomonadales</taxon>
        <taxon>Pseudomonadaceae</taxon>
        <taxon>Stutzerimonas</taxon>
    </lineage>
</organism>
<accession>A4VG93</accession>
<sequence length="301" mass="32628">MKIAVLSRNPRLYSTRRLVEAGEQRGHEVVVIDTLRAYMNIASHKPQIHYRGKPLEGFDAVIPRIGASVTFYGCAVLRQFEMQGVFPLNESVAIARSRDKLRALQLLSRRGVGLPVTGFAHSPDDIPDLIRMVNGAPLVIKVLEGTQGIGVVLCETEKAAESVIEAFMGLKQDIMVQEYIKEAGGADIRCFVVGDKVIAAMKRQAKPGEFRSNLHRGGSASLIKITPEERMTAIRAAKVMGLNVAGVDILRSNHGPLVMEVNSSPGLAGIEETTGKDVAGLIIQYLEKNGGPHLTRTKGKG</sequence>
<reference key="1">
    <citation type="journal article" date="2008" name="Proc. Natl. Acad. Sci. U.S.A.">
        <title>Nitrogen fixation island and rhizosphere competence traits in the genome of root-associated Pseudomonas stutzeri A1501.</title>
        <authorList>
            <person name="Yan Y."/>
            <person name="Yang J."/>
            <person name="Dou Y."/>
            <person name="Chen M."/>
            <person name="Ping S."/>
            <person name="Peng J."/>
            <person name="Lu W."/>
            <person name="Zhang W."/>
            <person name="Yao Z."/>
            <person name="Li H."/>
            <person name="Liu W."/>
            <person name="He S."/>
            <person name="Geng L."/>
            <person name="Zhang X."/>
            <person name="Yang F."/>
            <person name="Yu H."/>
            <person name="Zhan Y."/>
            <person name="Li D."/>
            <person name="Lin Z."/>
            <person name="Wang Y."/>
            <person name="Elmerich C."/>
            <person name="Lin M."/>
            <person name="Jin Q."/>
        </authorList>
    </citation>
    <scope>NUCLEOTIDE SEQUENCE [LARGE SCALE GENOMIC DNA]</scope>
    <source>
        <strain>A1501</strain>
    </source>
</reference>
<protein>
    <recommendedName>
        <fullName evidence="1">Probable alpha-L-glutamate ligase</fullName>
        <ecNumber evidence="1">6.3.2.-</ecNumber>
    </recommendedName>
</protein>
<proteinExistence type="inferred from homology"/>
<gene>
    <name evidence="1" type="primary">rimK</name>
    <name type="ordered locus">PST_0288</name>
</gene>
<dbReference type="EC" id="6.3.2.-" evidence="1"/>
<dbReference type="EMBL" id="CP000304">
    <property type="protein sequence ID" value="ABP77994.1"/>
    <property type="molecule type" value="Genomic_DNA"/>
</dbReference>
<dbReference type="RefSeq" id="WP_011911526.1">
    <property type="nucleotide sequence ID" value="NC_009434.1"/>
</dbReference>
<dbReference type="SMR" id="A4VG93"/>
<dbReference type="GeneID" id="66819532"/>
<dbReference type="KEGG" id="psa:PST_0288"/>
<dbReference type="eggNOG" id="COG0189">
    <property type="taxonomic scope" value="Bacteria"/>
</dbReference>
<dbReference type="HOGENOM" id="CLU_054353_0_1_6"/>
<dbReference type="Proteomes" id="UP000000233">
    <property type="component" value="Chromosome"/>
</dbReference>
<dbReference type="GO" id="GO:0005737">
    <property type="term" value="C:cytoplasm"/>
    <property type="evidence" value="ECO:0007669"/>
    <property type="project" value="TreeGrafter"/>
</dbReference>
<dbReference type="GO" id="GO:0005524">
    <property type="term" value="F:ATP binding"/>
    <property type="evidence" value="ECO:0007669"/>
    <property type="project" value="UniProtKB-UniRule"/>
</dbReference>
<dbReference type="GO" id="GO:0046872">
    <property type="term" value="F:metal ion binding"/>
    <property type="evidence" value="ECO:0007669"/>
    <property type="project" value="UniProtKB-KW"/>
</dbReference>
<dbReference type="GO" id="GO:0018169">
    <property type="term" value="F:ribosomal S6-glutamic acid ligase activity"/>
    <property type="evidence" value="ECO:0007669"/>
    <property type="project" value="TreeGrafter"/>
</dbReference>
<dbReference type="GO" id="GO:0036211">
    <property type="term" value="P:protein modification process"/>
    <property type="evidence" value="ECO:0007669"/>
    <property type="project" value="InterPro"/>
</dbReference>
<dbReference type="GO" id="GO:0009432">
    <property type="term" value="P:SOS response"/>
    <property type="evidence" value="ECO:0007669"/>
    <property type="project" value="TreeGrafter"/>
</dbReference>
<dbReference type="GO" id="GO:0006412">
    <property type="term" value="P:translation"/>
    <property type="evidence" value="ECO:0007669"/>
    <property type="project" value="UniProtKB-KW"/>
</dbReference>
<dbReference type="FunFam" id="3.40.50.20:FF:000004">
    <property type="entry name" value="Probable alpha-L-glutamate ligase"/>
    <property type="match status" value="1"/>
</dbReference>
<dbReference type="FunFam" id="3.30.1490.20:FF:000005">
    <property type="entry name" value="Probable alpha-L-glutamate ligase 1"/>
    <property type="match status" value="1"/>
</dbReference>
<dbReference type="FunFam" id="3.30.470.20:FF:000016">
    <property type="entry name" value="Ribosomal protein S6--L-glutamate ligase"/>
    <property type="match status" value="1"/>
</dbReference>
<dbReference type="Gene3D" id="3.40.50.20">
    <property type="match status" value="1"/>
</dbReference>
<dbReference type="Gene3D" id="3.30.1490.20">
    <property type="entry name" value="ATP-grasp fold, A domain"/>
    <property type="match status" value="1"/>
</dbReference>
<dbReference type="Gene3D" id="3.30.470.20">
    <property type="entry name" value="ATP-grasp fold, B domain"/>
    <property type="match status" value="1"/>
</dbReference>
<dbReference type="HAMAP" id="MF_01552">
    <property type="entry name" value="RimK"/>
    <property type="match status" value="1"/>
</dbReference>
<dbReference type="InterPro" id="IPR011761">
    <property type="entry name" value="ATP-grasp"/>
</dbReference>
<dbReference type="InterPro" id="IPR013651">
    <property type="entry name" value="ATP-grasp_RimK-type"/>
</dbReference>
<dbReference type="InterPro" id="IPR013815">
    <property type="entry name" value="ATP_grasp_subdomain_1"/>
</dbReference>
<dbReference type="InterPro" id="IPR023533">
    <property type="entry name" value="RimK"/>
</dbReference>
<dbReference type="InterPro" id="IPR041107">
    <property type="entry name" value="Rimk_N"/>
</dbReference>
<dbReference type="InterPro" id="IPR004666">
    <property type="entry name" value="Rp_bS6_RimK/Lys_biosynth_LsyX"/>
</dbReference>
<dbReference type="NCBIfam" id="NF007764">
    <property type="entry name" value="PRK10446.1"/>
    <property type="match status" value="1"/>
</dbReference>
<dbReference type="NCBIfam" id="TIGR00768">
    <property type="entry name" value="rimK_fam"/>
    <property type="match status" value="1"/>
</dbReference>
<dbReference type="PANTHER" id="PTHR21621:SF7">
    <property type="entry name" value="RIBOSOMAL PROTEIN BS6--L-GLUTAMATE LIGASE"/>
    <property type="match status" value="1"/>
</dbReference>
<dbReference type="PANTHER" id="PTHR21621">
    <property type="entry name" value="RIBOSOMAL PROTEIN S6 MODIFICATION PROTEIN"/>
    <property type="match status" value="1"/>
</dbReference>
<dbReference type="Pfam" id="PF08443">
    <property type="entry name" value="RimK"/>
    <property type="match status" value="1"/>
</dbReference>
<dbReference type="Pfam" id="PF18030">
    <property type="entry name" value="Rimk_N"/>
    <property type="match status" value="1"/>
</dbReference>
<dbReference type="SUPFAM" id="SSF56059">
    <property type="entry name" value="Glutathione synthetase ATP-binding domain-like"/>
    <property type="match status" value="1"/>
</dbReference>
<dbReference type="PROSITE" id="PS50975">
    <property type="entry name" value="ATP_GRASP"/>
    <property type="match status" value="1"/>
</dbReference>
<evidence type="ECO:0000255" key="1">
    <source>
        <dbReference type="HAMAP-Rule" id="MF_01552"/>
    </source>
</evidence>
<keyword id="KW-0067">ATP-binding</keyword>
<keyword id="KW-0436">Ligase</keyword>
<keyword id="KW-0460">Magnesium</keyword>
<keyword id="KW-0464">Manganese</keyword>
<keyword id="KW-0479">Metal-binding</keyword>
<keyword id="KW-0547">Nucleotide-binding</keyword>
<keyword id="KW-0648">Protein biosynthesis</keyword>
<keyword id="KW-1185">Reference proteome</keyword>